<feature type="signal peptide" evidence="11">
    <location>
        <begin position="1"/>
        <end position="21"/>
    </location>
</feature>
<feature type="chain" id="PRO_0000008595" description="Acetylcholinesterase">
    <location>
        <begin position="22"/>
        <end position="564"/>
    </location>
</feature>
<feature type="propeptide" id="PRO_0000008596" description="Removed in mature form">
    <location>
        <begin position="565"/>
        <end position="586"/>
    </location>
</feature>
<feature type="active site" description="Acyl-ester intermediate">
    <location>
        <position position="221"/>
    </location>
</feature>
<feature type="active site" description="Charge relay system">
    <location>
        <position position="348"/>
    </location>
</feature>
<feature type="active site" description="Charge relay system">
    <location>
        <position position="461"/>
    </location>
</feature>
<feature type="lipid moiety-binding region" description="GPI-anchor amidated serine" evidence="13">
    <location>
        <position position="564"/>
    </location>
</feature>
<feature type="glycosylation site" description="N-linked (GlcNAc...) asparagine" evidence="1 6">
    <location>
        <position position="80"/>
    </location>
</feature>
<feature type="glycosylation site" description="N-linked (GlcNAc...) asparagine" evidence="1 6 7">
    <location>
        <position position="437"/>
    </location>
</feature>
<feature type="glycosylation site" description="N-linked (GlcNAc...) asparagine" evidence="1">
    <location>
        <position position="478"/>
    </location>
</feature>
<feature type="glycosylation site" description="N-linked (GlcNAc...) asparagine" evidence="1">
    <location>
        <position position="554"/>
    </location>
</feature>
<feature type="disulfide bond">
    <location>
        <begin position="88"/>
        <end position="115"/>
    </location>
</feature>
<feature type="disulfide bond">
    <location>
        <begin position="275"/>
        <end position="286"/>
    </location>
</feature>
<feature type="disulfide bond">
    <location>
        <begin position="423"/>
        <end position="542"/>
    </location>
</feature>
<feature type="disulfide bond" description="Interchain">
    <location>
        <position position="558"/>
    </location>
</feature>
<feature type="splice variant" id="VSP_001460" description="In isoform T." evidence="16">
    <original>ACDGELSSSGTSSSKGIIFYVLFSILYLIF</original>
    <variation>ETIDEAERQWKTEFHRWSSYMMHWKNQFDHYSRHESCAEL</variation>
    <location>
        <begin position="557"/>
        <end position="586"/>
    </location>
</feature>
<feature type="mutagenesis site" description="Loss of activity." evidence="10">
    <original>E</original>
    <variation>H</variation>
    <location>
        <position position="220"/>
    </location>
</feature>
<feature type="mutagenesis site" description="Decrease in activity." evidence="10">
    <original>E</original>
    <variation>Q</variation>
    <variation>D</variation>
    <location>
        <position position="220"/>
    </location>
</feature>
<feature type="mutagenesis site" description="Loss of activity." evidence="10">
    <original>S</original>
    <variation>C</variation>
    <location>
        <position position="221"/>
    </location>
</feature>
<feature type="mutagenesis site" description="Loss of activity." evidence="10">
    <original>S</original>
    <variation>V</variation>
    <location>
        <position position="221"/>
    </location>
</feature>
<feature type="mutagenesis site" description="Almost no loss of activity." evidence="10">
    <original>H</original>
    <variation>Q</variation>
    <location>
        <position position="446"/>
    </location>
</feature>
<feature type="mutagenesis site" description="Loss of activity." evidence="10">
    <original>H</original>
    <variation>Q</variation>
    <location>
        <position position="461"/>
    </location>
</feature>
<feature type="strand" evidence="27">
    <location>
        <begin position="27"/>
        <end position="31"/>
    </location>
</feature>
<feature type="strand" evidence="27">
    <location>
        <begin position="34"/>
        <end position="37"/>
    </location>
</feature>
<feature type="strand" evidence="27">
    <location>
        <begin position="39"/>
        <end position="43"/>
    </location>
</feature>
<feature type="strand" evidence="27">
    <location>
        <begin position="46"/>
        <end position="55"/>
    </location>
</feature>
<feature type="helix" evidence="27">
    <location>
        <begin position="62"/>
        <end position="64"/>
    </location>
</feature>
<feature type="strand" evidence="27">
    <location>
        <begin position="76"/>
        <end position="80"/>
    </location>
</feature>
<feature type="strand" evidence="25">
    <location>
        <begin position="87"/>
        <end position="89"/>
    </location>
</feature>
<feature type="strand" evidence="17">
    <location>
        <begin position="95"/>
        <end position="98"/>
    </location>
</feature>
<feature type="helix" evidence="27">
    <location>
        <begin position="100"/>
        <end position="103"/>
    </location>
</feature>
<feature type="strand" evidence="22">
    <location>
        <begin position="111"/>
        <end position="113"/>
    </location>
</feature>
<feature type="strand" evidence="27">
    <location>
        <begin position="117"/>
        <end position="122"/>
    </location>
</feature>
<feature type="strand" evidence="27">
    <location>
        <begin position="128"/>
        <end position="136"/>
    </location>
</feature>
<feature type="turn" evidence="27">
    <location>
        <begin position="140"/>
        <end position="142"/>
    </location>
</feature>
<feature type="helix" evidence="27">
    <location>
        <begin position="149"/>
        <end position="151"/>
    </location>
</feature>
<feature type="helix" evidence="27">
    <location>
        <begin position="154"/>
        <end position="160"/>
    </location>
</feature>
<feature type="strand" evidence="27">
    <location>
        <begin position="163"/>
        <end position="166"/>
    </location>
</feature>
<feature type="helix" evidence="27">
    <location>
        <begin position="172"/>
        <end position="176"/>
    </location>
</feature>
<feature type="strand" evidence="27">
    <location>
        <begin position="183"/>
        <end position="187"/>
    </location>
</feature>
<feature type="helix" evidence="27">
    <location>
        <begin position="189"/>
        <end position="204"/>
    </location>
</feature>
<feature type="helix" evidence="27">
    <location>
        <begin position="205"/>
        <end position="208"/>
    </location>
</feature>
<feature type="strand" evidence="27">
    <location>
        <begin position="210"/>
        <end position="220"/>
    </location>
</feature>
<feature type="helix" evidence="27">
    <location>
        <begin position="222"/>
        <end position="232"/>
    </location>
</feature>
<feature type="turn" evidence="27">
    <location>
        <begin position="234"/>
        <end position="236"/>
    </location>
</feature>
<feature type="helix" evidence="27">
    <location>
        <begin position="237"/>
        <end position="239"/>
    </location>
</feature>
<feature type="strand" evidence="27">
    <location>
        <begin position="241"/>
        <end position="247"/>
    </location>
</feature>
<feature type="turn" evidence="18">
    <location>
        <begin position="253"/>
        <end position="255"/>
    </location>
</feature>
<feature type="helix" evidence="27">
    <location>
        <begin position="259"/>
        <end position="272"/>
    </location>
</feature>
<feature type="helix" evidence="27">
    <location>
        <begin position="280"/>
        <end position="289"/>
    </location>
</feature>
<feature type="helix" evidence="27">
    <location>
        <begin position="292"/>
        <end position="297"/>
    </location>
</feature>
<feature type="helix" evidence="27">
    <location>
        <begin position="298"/>
        <end position="302"/>
    </location>
</feature>
<feature type="strand" evidence="27">
    <location>
        <begin position="304"/>
        <end position="306"/>
    </location>
</feature>
<feature type="strand" evidence="23">
    <location>
        <begin position="307"/>
        <end position="309"/>
    </location>
</feature>
<feature type="strand" evidence="27">
    <location>
        <begin position="319"/>
        <end position="324"/>
    </location>
</feature>
<feature type="helix" evidence="27">
    <location>
        <begin position="326"/>
        <end position="332"/>
    </location>
</feature>
<feature type="strand" evidence="27">
    <location>
        <begin position="340"/>
        <end position="345"/>
    </location>
</feature>
<feature type="strand" evidence="20">
    <location>
        <begin position="347"/>
        <end position="349"/>
    </location>
</feature>
<feature type="helix" evidence="27">
    <location>
        <begin position="350"/>
        <end position="356"/>
    </location>
</feature>
<feature type="helix" evidence="26">
    <location>
        <begin position="358"/>
        <end position="361"/>
    </location>
</feature>
<feature type="strand" evidence="21">
    <location>
        <begin position="362"/>
        <end position="364"/>
    </location>
</feature>
<feature type="helix" evidence="27">
    <location>
        <begin position="370"/>
        <end position="380"/>
    </location>
</feature>
<feature type="helix" evidence="27">
    <location>
        <begin position="386"/>
        <end position="395"/>
    </location>
</feature>
<feature type="strand" evidence="24">
    <location>
        <begin position="401"/>
        <end position="403"/>
    </location>
</feature>
<feature type="helix" evidence="27">
    <location>
        <begin position="405"/>
        <end position="420"/>
    </location>
</feature>
<feature type="helix" evidence="27">
    <location>
        <begin position="422"/>
        <end position="435"/>
    </location>
</feature>
<feature type="strand" evidence="27">
    <location>
        <begin position="439"/>
        <end position="444"/>
    </location>
</feature>
<feature type="helix" evidence="27">
    <location>
        <begin position="455"/>
        <end position="457"/>
    </location>
</feature>
<feature type="turn" evidence="27">
    <location>
        <begin position="461"/>
        <end position="464"/>
    </location>
</feature>
<feature type="helix" evidence="27">
    <location>
        <begin position="465"/>
        <end position="468"/>
    </location>
</feature>
<feature type="helix" evidence="27">
    <location>
        <begin position="471"/>
        <end position="473"/>
    </location>
</feature>
<feature type="helix" evidence="27">
    <location>
        <begin position="475"/>
        <end position="477"/>
    </location>
</feature>
<feature type="helix" evidence="27">
    <location>
        <begin position="481"/>
        <end position="500"/>
    </location>
</feature>
<feature type="strand" evidence="19">
    <location>
        <begin position="501"/>
        <end position="504"/>
    </location>
</feature>
<feature type="strand" evidence="28">
    <location>
        <begin position="508"/>
        <end position="510"/>
    </location>
</feature>
<feature type="turn" evidence="27">
    <location>
        <begin position="518"/>
        <end position="520"/>
    </location>
</feature>
<feature type="strand" evidence="27">
    <location>
        <begin position="522"/>
        <end position="529"/>
    </location>
</feature>
<feature type="strand" evidence="27">
    <location>
        <begin position="533"/>
        <end position="536"/>
    </location>
</feature>
<feature type="helix" evidence="27">
    <location>
        <begin position="539"/>
        <end position="546"/>
    </location>
</feature>
<feature type="helix" evidence="27">
    <location>
        <begin position="548"/>
        <end position="555"/>
    </location>
</feature>
<organism>
    <name type="scientific">Tetronarce californica</name>
    <name type="common">Pacific electric ray</name>
    <name type="synonym">Torpedo californica</name>
    <dbReference type="NCBI Taxonomy" id="7787"/>
    <lineage>
        <taxon>Eukaryota</taxon>
        <taxon>Metazoa</taxon>
        <taxon>Chordata</taxon>
        <taxon>Craniata</taxon>
        <taxon>Vertebrata</taxon>
        <taxon>Chondrichthyes</taxon>
        <taxon>Elasmobranchii</taxon>
        <taxon>Batoidea</taxon>
        <taxon>Torpediniformes</taxon>
        <taxon>Torpedinidae</taxon>
        <taxon>Tetronarce</taxon>
    </lineage>
</organism>
<accession>P04058</accession>
<sequence>MNLLVTSSLGVLLHLVVLCQADDHSELLVNTKSGKVMGTRVPVLSSHISAFLGIPFAEPPVGNMRFRRPEPKKPWSGVWNASTYPNNCQQYVDEQFPGFSGSEMWNPNREMSEDCLYLNIWVPSPRPKSTTVMVWIYGGGFYSGSSTLDVYNGKYLAYTEEVVLVSLSYRVGAFGFLALHGSQEAPGNVGLLDQRMALQWVHDNIQFFGGDPKTVTIFGESAGGASVGMHILSPGSRDLFRRAILQSGSPNCPWASVSVAEGRRRAVELGRNLNCNLNSDEELIHCLREKKPQELIDVEWNVLPFDSIFRFSFVPVIDGEFFPTSLESMLNSGNFKKTQILLGVNKDEGSFFLLYGAPGFSKDSESKISREDFMSGVKLSVPHANDLGLDAVTLQYTDWMDDNNGIKNRDGLDDIVGDHNVICPLMHFVNKYTKFGNGTYLYFFNHRASNLVWPEWMGVIHGYEIEFVFGLPLVKELNYTAEEEALSRRIMHYWATFAKTGNPNEPHSQESKWPLFTTKEQKFIDLNTEPMKVHQRLRVQMCVFWNQFLPKLLNATACDGELSSSGTSSSKGIIFYVLFSILYLIF</sequence>
<proteinExistence type="evidence at protein level"/>
<protein>
    <recommendedName>
        <fullName>Acetylcholinesterase</fullName>
        <shortName>AChE</shortName>
        <ecNumber>3.1.1.7</ecNumber>
    </recommendedName>
</protein>
<name>ACES_TETCF</name>
<reference key="1">
    <citation type="journal article" date="1986" name="Nature">
        <title>Primary structure of Torpedo californica acetylcholinesterase deduced from its cDNA sequence.</title>
        <authorList>
            <person name="Schumacher M."/>
            <person name="Camp S."/>
            <person name="Maulet Y."/>
            <person name="Newton M."/>
            <person name="McPhee-Quigley K."/>
            <person name="Taylor S.S."/>
            <person name="Friedmann T."/>
            <person name="Taylor P."/>
        </authorList>
    </citation>
    <scope>NUCLEOTIDE SEQUENCE [MRNA] OF 10-586</scope>
</reference>
<reference key="2">
    <citation type="journal article" date="1988" name="J. Biol. Chem.">
        <title>Multiple messenger RNA species give rise to the structural diversity in acetylcholinesterase.</title>
        <authorList>
            <person name="Schumacher M."/>
        </authorList>
    </citation>
    <scope>NUCLEOTIDE SEQUENCE [GENOMIC DNA] OF 1-9</scope>
</reference>
<reference key="3">
    <citation type="journal article" date="1985" name="J. Biol. Chem.">
        <title>Primary structures of the catalytic subunits from two molecular forms of acetylcholinesterase. A comparison of NH2-terminal and active center sequences.</title>
        <authorList>
            <person name="MacPhee-Quigley K."/>
            <person name="Taylor P."/>
            <person name="Taylor S."/>
        </authorList>
    </citation>
    <scope>PROTEIN SEQUENCE OF 22-45 AND 214-237</scope>
</reference>
<reference key="4">
    <citation type="journal article" date="1991" name="Proc. Natl. Acad. Sci. U.S.A.">
        <title>Anionic subsites of the catalytic center of acetylcholinesterase from Torpedo and from cobra venom.</title>
        <authorList>
            <person name="Kreienkamp H.J."/>
            <person name="Weise C."/>
            <person name="Raba R."/>
            <person name="Aaviksaar A."/>
            <person name="Hucho F."/>
        </authorList>
    </citation>
    <scope>PROTEIN SEQUENCE OF 100-108</scope>
</reference>
<reference key="5">
    <citation type="journal article" date="1988" name="J. Biol. Chem.">
        <title>Divergence in primary structure between the molecular forms of acetylcholinesterase.</title>
        <authorList>
            <person name="Gibney G."/>
            <person name="Macphee-Quigley K."/>
            <person name="Thompson B."/>
            <person name="Vedvick T."/>
            <person name="Low M.G."/>
            <person name="Taylor S.S."/>
            <person name="Taylor P."/>
        </authorList>
    </citation>
    <scope>PROTEIN SEQUENCE OF 552-558</scope>
</reference>
<reference key="6">
    <citation type="journal article" date="1990" name="Neuron">
        <title>Single gene encodes glycophospholipid-anchored and asymmetric acetylcholinesterase forms: alternative coding exons contain inverted repeat sequences.</title>
        <authorList>
            <person name="Maulet Y."/>
            <person name="Camp S."/>
            <person name="Gibney G."/>
            <person name="Rachinsky T.L."/>
            <person name="Ekstroem T.J."/>
            <person name="Taylor P."/>
        </authorList>
    </citation>
    <scope>ALTERNATIVE SPLICING</scope>
</reference>
<reference key="7">
    <citation type="journal article" date="1986" name="J. Biol. Chem.">
        <title>Profile of the disulfide bonds in acetylcholinesterase.</title>
        <authorList>
            <person name="McPhee-Quigley K."/>
            <person name="Vedvick T.S."/>
            <person name="Taylor P."/>
            <person name="Taylor S.S."/>
        </authorList>
    </citation>
    <scope>DISULFIDE BONDS</scope>
</reference>
<reference key="8">
    <citation type="journal article" date="1993" name="Biochem. J.">
        <title>Structure of the glycosyl-phosphatidylinositol membrane anchor of acetylcholinesterase from the electric organ of the electric-fish, Torpedo californica.</title>
        <authorList>
            <person name="Mehlert A."/>
            <person name="Varon L."/>
            <person name="Silman I."/>
            <person name="Homans S.W."/>
            <person name="Ferguson M.A."/>
        </authorList>
    </citation>
    <scope>STRUCTURE OF THE GPI-ANCHOR</scope>
</reference>
<reference key="9">
    <citation type="journal article" date="1996" name="Biochim. Biophys. Acta">
        <title>Residues in Torpedo californica acetylcholinesterase necessary for processing to a glycosyl phosphatidylinositol-anchored form.</title>
        <authorList>
            <person name="Bucht G."/>
            <person name="Hjalmarsson K."/>
        </authorList>
    </citation>
    <scope>GPI-ANCHOR AT SER-564</scope>
</reference>
<reference key="10">
    <citation type="journal article" date="1990" name="Proc. Natl. Acad. Sci. U.S.A.">
        <title>Mutagenesis of essential functional residues in acetylcholinesterase.</title>
        <authorList>
            <person name="Gibney G."/>
            <person name="Camp S."/>
            <person name="Dionne M."/>
            <person name="McPhee-Quigley K."/>
            <person name="Taylor P."/>
        </authorList>
    </citation>
    <scope>MUTAGENESIS</scope>
</reference>
<reference key="11">
    <citation type="journal article" date="1991" name="Science">
        <title>Atomic structure of acetylcholinesterase from Torpedo californica: a prototypic acetylcholine-binding protein.</title>
        <authorList>
            <person name="Sussman J.L."/>
            <person name="Harel M."/>
            <person name="Frolow F."/>
            <person name="Oefner C."/>
            <person name="Goldman A."/>
            <person name="Toker L."/>
            <person name="Silman I."/>
        </authorList>
    </citation>
    <scope>X-RAY CRYSTALLOGRAPHY (2.8 ANGSTROMS) OF 22-558</scope>
    <scope>ACTIVE SITE</scope>
    <scope>GLYCOSYLATION AT ASN-437</scope>
    <scope>DISULFIDE BONDS</scope>
    <scope>SUBUNIT</scope>
</reference>
<reference key="12">
    <citation type="journal article" date="1993" name="Proc. Natl. Acad. Sci. U.S.A.">
        <title>Quaternary ligand binding to aromatic residues in the active-site gorge of acetylcholinesterase.</title>
        <authorList>
            <person name="Harel M."/>
            <person name="Schalk I."/>
            <person name="Ehret-Sabatier L."/>
            <person name="Bouet F."/>
            <person name="Goeldner M."/>
            <person name="Hirth C."/>
            <person name="Axelsen P.H."/>
            <person name="Silman I."/>
            <person name="Sussman J.L."/>
        </authorList>
    </citation>
    <scope>X-RAY CRYSTALLOGRAPHY (2.8 ANGSTROMS) OF 22-556 IN COMPLEX WITH SUBSTRATE ANALOGS</scope>
</reference>
<reference key="13">
    <citation type="journal article" date="1995" name="Structure">
        <title>Crystal structure of an acetylcholinesterase-fasciculin complex: interaction of a three-fingered toxin from snake venom with its target.</title>
        <authorList>
            <person name="Harel M."/>
            <person name="Kleywegt G.J."/>
            <person name="Ravelli R.B."/>
            <person name="Silman I."/>
            <person name="Sussman J.L."/>
        </authorList>
    </citation>
    <scope>X-RAY CRYSTALLOGRAPHY (3.0 ANGSTROMS) OF 22-558 IN COMPLEX WITH FASCICULIN-2</scope>
    <scope>DISULFIDE BOND</scope>
</reference>
<reference key="14">
    <citation type="journal article" date="1997" name="Nat. Struct. Biol.">
        <title>Structure of acetylcholinesterase complexed with the nootropic alkaloid, (-)-huperzine A.</title>
        <authorList>
            <person name="Raves M.L."/>
            <person name="Harel M."/>
            <person name="Pang Y.P."/>
            <person name="Silman I."/>
            <person name="Kozikowski A.P."/>
            <person name="Sussman J.L."/>
        </authorList>
    </citation>
    <scope>X-RAY CRYSTALLOGRAPHY (2.5 ANGSTROMS) OF 22-558 IN COMPLEX WITH THE INHIBITOR HUPERZINE A</scope>
</reference>
<reference key="15">
    <citation type="journal article" date="1999" name="Biochemistry">
        <title>'Back door' opening implied by the crystal structure of a carbamoylated acetylcholinesterase.</title>
        <authorList>
            <person name="Bartolucci C."/>
            <person name="Perola E."/>
            <person name="Cellai L."/>
            <person name="Brufani M."/>
            <person name="Lamba D."/>
        </authorList>
    </citation>
    <scope>X-RAY CRYSTALLOGRAPHY (2.7 ANGSTROMS) OF 22-558</scope>
</reference>
<reference key="16">
    <citation type="journal article" date="1999" name="Biochemistry">
        <title>Crystal structures of aged phosphonylated acetylcholinesterase: nerve agent reaction products at the atomic level.</title>
        <authorList>
            <person name="Millard C.B."/>
            <person name="Kryger G."/>
            <person name="Ordentlich A."/>
            <person name="Greenblatt H.M."/>
            <person name="Harel M."/>
            <person name="Raves M.L."/>
            <person name="Segall Y."/>
            <person name="Barak D."/>
            <person name="Shafferman A."/>
            <person name="Silman I."/>
            <person name="Sussman J.L."/>
        </authorList>
    </citation>
    <scope>X-RAY CRYSTALLOGRAPHY (2.3 ANGSTROMS) OF 22-558</scope>
</reference>
<reference key="17">
    <citation type="journal article" date="1999" name="FEBS Lett.">
        <title>Structure of acetylcholinesterase complexed with (-)-galanthamine at 2.3-A resolution.</title>
        <authorList>
            <person name="Greenblatt H.M."/>
            <person name="Kryger G."/>
            <person name="Lewis T."/>
            <person name="Silman I."/>
            <person name="Sussman J.L."/>
        </authorList>
    </citation>
    <scope>X-RAY CRYSTALLOGRAPHY (2.3 ANGSTROMS) OF 22-564 IN COMPLEX WITH GALANTHAMINE</scope>
</reference>
<reference key="18">
    <citation type="journal article" date="1999" name="Structure">
        <title>Structure of acetylcholinesterase complexed with E2020 (Aricept(R)): implications for the design of new anti-Alzheimer drugs.</title>
        <authorList>
            <person name="Kryger G."/>
            <person name="Silman I."/>
            <person name="Sussman J.L."/>
        </authorList>
    </citation>
    <scope>X-RAY CRYSTALLOGRAPHY (2.5 ANGSTROMS) OF 22-564 IN COMPLEX WITH THE SYNTHETIC INHIBITOR ARICEPT</scope>
    <scope>GLYCOSYLATION AT ASN-80; ASN-437; ASN-478 AND ASN-554</scope>
</reference>
<reference key="19">
    <citation type="journal article" date="2002" name="Biochemistry">
        <title>3D structure of Torpedo californica acetylcholinesterase complexed with huprine X at 2.1 A resolution: kinetic and molecular dynamic correlates.</title>
        <authorList>
            <person name="Dvir H."/>
            <person name="Wong D.M."/>
            <person name="Harel M."/>
            <person name="Barril X."/>
            <person name="Orozco M."/>
            <person name="Luque F.J."/>
            <person name="Munoz-Torrero D."/>
            <person name="Camps P."/>
            <person name="Rosenberry T.L."/>
            <person name="Silman I."/>
            <person name="Sussman J.L."/>
        </authorList>
    </citation>
    <scope>X-RAY CRYSTALLOGRAPHY (2.1 ANGSTROMS) OF 22-564 IN COMPLEX WITH THE SYNTHETIC INHIBITOR HUPRINE</scope>
</reference>
<reference key="20">
    <citation type="journal article" date="2002" name="Biochemistry">
        <title>Kinetic and structural studies on the interaction of cholinesterases with the anti-Alzheimer drug rivastigmine.</title>
        <authorList>
            <person name="Bar-On P."/>
            <person name="Millard C.B."/>
            <person name="Harel M."/>
            <person name="Dvir H."/>
            <person name="Enz A."/>
            <person name="Sussman J.L."/>
            <person name="Silman I."/>
        </authorList>
    </citation>
    <scope>X-RAY CRYSTALLOGRAPHY (2.2 ANGSTROMS) OF 25-556 IN COMPLEX WITH THE SYNTHETIC INHIBITOR RIVASTIGMINE</scope>
</reference>
<reference key="21">
    <citation type="journal article" date="2005" name="Mol. Pharmacol.">
        <title>The crystal structure of the complex of the anticancer prodrug 7-ethyl-10-[4-(1-piperidino)-1-piperidino]-carbonyloxycamptothecin (CPT-11) with Torpedo californica acetylcholinesterase provides a molecular explanation for its cholinergic action.</title>
        <authorList>
            <person name="Harel M."/>
            <person name="Hyatt J.L."/>
            <person name="Brumshtein B."/>
            <person name="Morton C.L."/>
            <person name="Yoon K.J."/>
            <person name="Wadkins R.M."/>
            <person name="Silman I."/>
            <person name="Sussman J.L."/>
            <person name="Potter P.M."/>
        </authorList>
    </citation>
    <scope>X-RAY CRYSTALLOGRAPHY (2.61 ANGSTROMS) OF 22-564 IN COMPLEX WITH THE SYNTHETIC INHIBITOR CPT-11</scope>
</reference>
<reference key="22">
    <citation type="journal article" date="2006" name="EMBO J.">
        <title>Structural insights into substrate traffic and inhibition in acetylcholinesterase.</title>
        <authorList>
            <person name="Colletier J.-P."/>
            <person name="Fournier D."/>
            <person name="Greenblatt H.M."/>
            <person name="Stojan J."/>
            <person name="Sussman J.L."/>
            <person name="Zaccai G."/>
            <person name="Silman I."/>
            <person name="Weik M."/>
        </authorList>
    </citation>
    <scope>X-RAY CRYSTALLOGRAPHY (1.95 ANGSTROMS) OF 22-558 IN COMPLEXES WITH SUBSTRATE AND SUBSTRATE ANALOGS</scope>
    <scope>GLYCOSYLATION AT ASN-80 AND ASN-437</scope>
    <scope>ACTIVE SITE</scope>
    <scope>ACTIVITY REGULATION</scope>
</reference>
<reference key="23">
    <citation type="journal article" date="2009" name="J. Med. Chem.">
        <title>Crystallographic snapshots of nonaged and aged conjugates of soman with acetylcholinesterase, and of a ternary complex of the aged conjugate with pralidoxime.</title>
        <authorList>
            <person name="Sanson B."/>
            <person name="Nachon F."/>
            <person name="Colletier J.P."/>
            <person name="Froment M.T."/>
            <person name="Toker L."/>
            <person name="Greenblatt H.M."/>
            <person name="Sussman J.L."/>
            <person name="Ashani Y."/>
            <person name="Masson P."/>
            <person name="Silman I."/>
            <person name="Weik M."/>
        </authorList>
    </citation>
    <scope>X-RAY CRYSTALLOGRAPHY (2.2 ANGSTROMS) OF 22-558 IN COMPLEX WITH SOMAN</scope>
    <scope>ACTIVE SITE</scope>
    <scope>DISULFIDE BONDS</scope>
</reference>
<reference key="24">
    <citation type="journal article" date="2010" name="J. Med. Chem.">
        <title>Probing Torpedo californica acetylcholinesterase catalytic gorge with two novel bis-functional galanthamine derivatives.</title>
        <authorList>
            <person name="Bartolucci C."/>
            <person name="Haller L.A."/>
            <person name="Jordis U."/>
            <person name="Fels G."/>
            <person name="Lamba D."/>
        </authorList>
    </citation>
    <scope>X-RAY CRYSTALLOGRAPHY (2.19 ANGSTROMS) OF 23-556 IN COMPLEX WITH GALANTHAMINE DERIVATIVES</scope>
</reference>
<keyword id="KW-0002">3D-structure</keyword>
<keyword id="KW-0025">Alternative splicing</keyword>
<keyword id="KW-1003">Cell membrane</keyword>
<keyword id="KW-0903">Direct protein sequencing</keyword>
<keyword id="KW-1015">Disulfide bond</keyword>
<keyword id="KW-0325">Glycoprotein</keyword>
<keyword id="KW-0336">GPI-anchor</keyword>
<keyword id="KW-0378">Hydrolase</keyword>
<keyword id="KW-0449">Lipoprotein</keyword>
<keyword id="KW-0472">Membrane</keyword>
<keyword id="KW-0531">Neurotransmitter degradation</keyword>
<keyword id="KW-0719">Serine esterase</keyword>
<keyword id="KW-0732">Signal</keyword>
<keyword id="KW-0770">Synapse</keyword>
<gene>
    <name type="primary">ache</name>
</gene>
<comment type="function">
    <text>Terminates signal transduction at the neuromuscular junction by rapid hydrolysis of the acetylcholine released into the synaptic cleft. May be involved in cell-cell interactions.</text>
</comment>
<comment type="catalytic activity">
    <reaction>
        <text>acetylcholine + H2O = choline + acetate + H(+)</text>
        <dbReference type="Rhea" id="RHEA:17561"/>
        <dbReference type="ChEBI" id="CHEBI:15354"/>
        <dbReference type="ChEBI" id="CHEBI:15355"/>
        <dbReference type="ChEBI" id="CHEBI:15377"/>
        <dbReference type="ChEBI" id="CHEBI:15378"/>
        <dbReference type="ChEBI" id="CHEBI:30089"/>
        <dbReference type="EC" id="3.1.1.7"/>
    </reaction>
</comment>
<comment type="activity regulation">
    <text evidence="6">Inhibited by substrate concentrations above 0.5 mM.</text>
</comment>
<comment type="subunit">
    <text evidence="1 2 3 4 5 7 8 9 12 14 15">Isoform H form is a homodimer; the asymmetric form is a disulfide-bonded oligomer composed of a collagenic subunit (Q) and a variable number of T catalytic subunits.</text>
</comment>
<comment type="subcellular location">
    <molecule>Isoform H</molecule>
    <subcellularLocation>
        <location>Cell membrane</location>
        <topology>Lipid-anchor</topology>
        <topology>GPI-anchor</topology>
    </subcellularLocation>
    <subcellularLocation>
        <location>Synapse</location>
    </subcellularLocation>
</comment>
<comment type="subcellular location">
    <molecule>Isoform T</molecule>
    <subcellularLocation>
        <location>Cell membrane</location>
        <topology>Peripheral membrane protein</topology>
    </subcellularLocation>
    <subcellularLocation>
        <location>Synapse</location>
    </subcellularLocation>
    <text>Attached to the membrane through disulfide linkage with the collagenic subunit, itself bound to the membrane.</text>
</comment>
<comment type="alternative products">
    <event type="alternative splicing"/>
    <isoform>
        <id>P04058-1</id>
        <name>H</name>
        <name>Globular</name>
        <sequence type="displayed"/>
    </isoform>
    <isoform>
        <id>P04058-2</id>
        <name>T</name>
        <sequence type="described" ref="VSP_001460"/>
    </isoform>
    <text>Additional isoforms seem to exist.</text>
</comment>
<comment type="tissue specificity">
    <text>Found in the synapses and to a lower extent in extrajunctional areas of muscle and nerve, and on erythrocyte membranes.</text>
</comment>
<comment type="PTM">
    <text>An interchain disulfide bond is present in what becomes position 593 of the T isoform.</text>
</comment>
<comment type="miscellaneous">
    <molecule>Isoform H</molecule>
    <text>GPI-anchored form.</text>
</comment>
<comment type="similarity">
    <text evidence="16">Belongs to the type-B carboxylesterase/lipase family.</text>
</comment>
<evidence type="ECO:0000269" key="1">
    <source>
    </source>
</evidence>
<evidence type="ECO:0000269" key="2">
    <source>
    </source>
</evidence>
<evidence type="ECO:0000269" key="3">
    <source>
    </source>
</evidence>
<evidence type="ECO:0000269" key="4">
    <source>
    </source>
</evidence>
<evidence type="ECO:0000269" key="5">
    <source>
    </source>
</evidence>
<evidence type="ECO:0000269" key="6">
    <source>
    </source>
</evidence>
<evidence type="ECO:0000269" key="7">
    <source>
    </source>
</evidence>
<evidence type="ECO:0000269" key="8">
    <source>
    </source>
</evidence>
<evidence type="ECO:0000269" key="9">
    <source>
    </source>
</evidence>
<evidence type="ECO:0000269" key="10">
    <source>
    </source>
</evidence>
<evidence type="ECO:0000269" key="11">
    <source>
    </source>
</evidence>
<evidence type="ECO:0000269" key="12">
    <source>
    </source>
</evidence>
<evidence type="ECO:0000269" key="13">
    <source>
    </source>
</evidence>
<evidence type="ECO:0000269" key="14">
    <source>
    </source>
</evidence>
<evidence type="ECO:0000269" key="15">
    <source>
    </source>
</evidence>
<evidence type="ECO:0000305" key="16"/>
<evidence type="ECO:0007829" key="17">
    <source>
        <dbReference type="PDB" id="1OCE"/>
    </source>
</evidence>
<evidence type="ECO:0007829" key="18">
    <source>
        <dbReference type="PDB" id="1QID"/>
    </source>
</evidence>
<evidence type="ECO:0007829" key="19">
    <source>
        <dbReference type="PDB" id="2CKM"/>
    </source>
</evidence>
<evidence type="ECO:0007829" key="20">
    <source>
        <dbReference type="PDB" id="2WFZ"/>
    </source>
</evidence>
<evidence type="ECO:0007829" key="21">
    <source>
        <dbReference type="PDB" id="2WG1"/>
    </source>
</evidence>
<evidence type="ECO:0007829" key="22">
    <source>
        <dbReference type="PDB" id="3ZV7"/>
    </source>
</evidence>
<evidence type="ECO:0007829" key="23">
    <source>
        <dbReference type="PDB" id="4W63"/>
    </source>
</evidence>
<evidence type="ECO:0007829" key="24">
    <source>
        <dbReference type="PDB" id="5NAU"/>
    </source>
</evidence>
<evidence type="ECO:0007829" key="25">
    <source>
        <dbReference type="PDB" id="6FLD"/>
    </source>
</evidence>
<evidence type="ECO:0007829" key="26">
    <source>
        <dbReference type="PDB" id="6H12"/>
    </source>
</evidence>
<evidence type="ECO:0007829" key="27">
    <source>
        <dbReference type="PDB" id="7AIS"/>
    </source>
</evidence>
<evidence type="ECO:0007829" key="28">
    <source>
        <dbReference type="PDB" id="7AIW"/>
    </source>
</evidence>
<dbReference type="EC" id="3.1.1.7"/>
<dbReference type="EMBL" id="X03439">
    <property type="protein sequence ID" value="CAA27169.1"/>
    <property type="molecule type" value="mRNA"/>
</dbReference>
<dbReference type="EMBL" id="X56516">
    <property type="status" value="NOT_ANNOTATED_CDS"/>
    <property type="molecule type" value="Genomic_DNA"/>
</dbReference>
<dbReference type="EMBL" id="X56517">
    <property type="status" value="NOT_ANNOTATED_CDS"/>
    <property type="molecule type" value="Genomic_DNA"/>
</dbReference>
<dbReference type="PIR" id="A00773">
    <property type="entry name" value="ACRYE"/>
</dbReference>
<dbReference type="PDB" id="1ACJ">
    <property type="method" value="X-ray"/>
    <property type="resolution" value="2.80 A"/>
    <property type="chains" value="A=22-556"/>
</dbReference>
<dbReference type="PDB" id="1ACL">
    <property type="method" value="X-ray"/>
    <property type="resolution" value="2.80 A"/>
    <property type="chains" value="A=22-556"/>
</dbReference>
<dbReference type="PDB" id="1AMN">
    <property type="method" value="X-ray"/>
    <property type="resolution" value="2.80 A"/>
    <property type="chains" value="A=22-558"/>
</dbReference>
<dbReference type="PDB" id="1AX9">
    <property type="method" value="X-ray"/>
    <property type="resolution" value="2.80 A"/>
    <property type="chains" value="A=22-558"/>
</dbReference>
<dbReference type="PDB" id="1CFJ">
    <property type="method" value="X-ray"/>
    <property type="resolution" value="2.60 A"/>
    <property type="chains" value="A=22-558"/>
</dbReference>
<dbReference type="PDB" id="1DX6">
    <property type="method" value="X-ray"/>
    <property type="resolution" value="2.30 A"/>
    <property type="chains" value="A=22-564"/>
</dbReference>
<dbReference type="PDB" id="1E3Q">
    <property type="method" value="X-ray"/>
    <property type="resolution" value="2.85 A"/>
    <property type="chains" value="A=22-564"/>
</dbReference>
<dbReference type="PDB" id="1E66">
    <property type="method" value="X-ray"/>
    <property type="resolution" value="2.10 A"/>
    <property type="chains" value="A=22-564"/>
</dbReference>
<dbReference type="PDB" id="1EA5">
    <property type="method" value="X-ray"/>
    <property type="resolution" value="1.80 A"/>
    <property type="chains" value="A=22-558"/>
</dbReference>
<dbReference type="PDB" id="1EEA">
    <property type="method" value="X-ray"/>
    <property type="resolution" value="4.50 A"/>
    <property type="chains" value="A=22-555"/>
</dbReference>
<dbReference type="PDB" id="1EVE">
    <property type="method" value="X-ray"/>
    <property type="resolution" value="2.50 A"/>
    <property type="chains" value="A=22-564"/>
</dbReference>
<dbReference type="PDB" id="1FSS">
    <property type="method" value="X-ray"/>
    <property type="resolution" value="3.00 A"/>
    <property type="chains" value="A=22-558"/>
</dbReference>
<dbReference type="PDB" id="1GPK">
    <property type="method" value="X-ray"/>
    <property type="resolution" value="2.10 A"/>
    <property type="chains" value="A=22-558"/>
</dbReference>
<dbReference type="PDB" id="1GPN">
    <property type="method" value="X-ray"/>
    <property type="resolution" value="2.35 A"/>
    <property type="chains" value="A=22-558"/>
</dbReference>
<dbReference type="PDB" id="1GQR">
    <property type="method" value="X-ray"/>
    <property type="resolution" value="2.20 A"/>
    <property type="chains" value="A=25-556"/>
</dbReference>
<dbReference type="PDB" id="1GQS">
    <property type="method" value="X-ray"/>
    <property type="resolution" value="3.00 A"/>
    <property type="chains" value="A=25-556"/>
</dbReference>
<dbReference type="PDB" id="1H22">
    <property type="method" value="X-ray"/>
    <property type="resolution" value="2.15 A"/>
    <property type="chains" value="A=22-564"/>
</dbReference>
<dbReference type="PDB" id="1H23">
    <property type="method" value="X-ray"/>
    <property type="resolution" value="2.15 A"/>
    <property type="chains" value="A=22-564"/>
</dbReference>
<dbReference type="PDB" id="1HBJ">
    <property type="method" value="X-ray"/>
    <property type="resolution" value="2.50 A"/>
    <property type="chains" value="A=22-564"/>
</dbReference>
<dbReference type="PDB" id="1JJB">
    <property type="method" value="X-ray"/>
    <property type="resolution" value="2.30 A"/>
    <property type="chains" value="A=25-556"/>
</dbReference>
<dbReference type="PDB" id="1OCE">
    <property type="method" value="X-ray"/>
    <property type="resolution" value="2.70 A"/>
    <property type="chains" value="A=22-558"/>
</dbReference>
<dbReference type="PDB" id="1ODC">
    <property type="method" value="X-ray"/>
    <property type="resolution" value="2.20 A"/>
    <property type="chains" value="A=22-564"/>
</dbReference>
<dbReference type="PDB" id="1QID">
    <property type="method" value="X-ray"/>
    <property type="resolution" value="2.05 A"/>
    <property type="chains" value="A=22-558"/>
</dbReference>
<dbReference type="PDB" id="1QIE">
    <property type="method" value="X-ray"/>
    <property type="resolution" value="2.10 A"/>
    <property type="chains" value="A=22-558"/>
</dbReference>
<dbReference type="PDB" id="1QIF">
    <property type="method" value="X-ray"/>
    <property type="resolution" value="2.10 A"/>
    <property type="chains" value="A=22-558"/>
</dbReference>
<dbReference type="PDB" id="1QIG">
    <property type="method" value="X-ray"/>
    <property type="resolution" value="2.30 A"/>
    <property type="chains" value="A=22-558"/>
</dbReference>
<dbReference type="PDB" id="1QIH">
    <property type="method" value="X-ray"/>
    <property type="resolution" value="2.50 A"/>
    <property type="chains" value="A=22-558"/>
</dbReference>
<dbReference type="PDB" id="1QII">
    <property type="method" value="X-ray"/>
    <property type="resolution" value="2.65 A"/>
    <property type="chains" value="A=22-558"/>
</dbReference>
<dbReference type="PDB" id="1QIJ">
    <property type="method" value="X-ray"/>
    <property type="resolution" value="2.80 A"/>
    <property type="chains" value="A=22-558"/>
</dbReference>
<dbReference type="PDB" id="1QIK">
    <property type="method" value="X-ray"/>
    <property type="resolution" value="2.90 A"/>
    <property type="chains" value="A=22-558"/>
</dbReference>
<dbReference type="PDB" id="1QIM">
    <property type="method" value="X-ray"/>
    <property type="resolution" value="3.00 A"/>
    <property type="chains" value="A=22-558"/>
</dbReference>
<dbReference type="PDB" id="1QTI">
    <property type="method" value="X-ray"/>
    <property type="resolution" value="2.50 A"/>
    <property type="chains" value="A=22-558"/>
</dbReference>
<dbReference type="PDB" id="1SOM">
    <property type="method" value="X-ray"/>
    <property type="resolution" value="2.20 A"/>
    <property type="chains" value="A=22-564"/>
</dbReference>
<dbReference type="PDB" id="1U65">
    <property type="method" value="X-ray"/>
    <property type="resolution" value="2.61 A"/>
    <property type="chains" value="A=22-564"/>
</dbReference>
<dbReference type="PDB" id="1UT6">
    <property type="method" value="X-ray"/>
    <property type="resolution" value="2.40 A"/>
    <property type="chains" value="A=22-556"/>
</dbReference>
<dbReference type="PDB" id="1VOT">
    <property type="method" value="X-ray"/>
    <property type="resolution" value="2.50 A"/>
    <property type="chains" value="A=22-558"/>
</dbReference>
<dbReference type="PDB" id="1VXO">
    <property type="method" value="X-ray"/>
    <property type="resolution" value="2.40 A"/>
    <property type="chains" value="A=22-558"/>
</dbReference>
<dbReference type="PDB" id="1VXR">
    <property type="method" value="X-ray"/>
    <property type="resolution" value="2.20 A"/>
    <property type="chains" value="A=22-558"/>
</dbReference>
<dbReference type="PDB" id="1W4L">
    <property type="method" value="X-ray"/>
    <property type="resolution" value="2.16 A"/>
    <property type="chains" value="A=22-564"/>
</dbReference>
<dbReference type="PDB" id="1W6R">
    <property type="method" value="X-ray"/>
    <property type="resolution" value="2.05 A"/>
    <property type="chains" value="A=22-564"/>
</dbReference>
<dbReference type="PDB" id="1W75">
    <property type="method" value="X-ray"/>
    <property type="resolution" value="2.40 A"/>
    <property type="chains" value="A/B=22-564"/>
</dbReference>
<dbReference type="PDB" id="1W76">
    <property type="method" value="X-ray"/>
    <property type="resolution" value="2.30 A"/>
    <property type="chains" value="A/B=22-564"/>
</dbReference>
<dbReference type="PDB" id="1ZGB">
    <property type="method" value="X-ray"/>
    <property type="resolution" value="2.30 A"/>
    <property type="chains" value="A=22-564"/>
</dbReference>
<dbReference type="PDB" id="1ZGC">
    <property type="method" value="X-ray"/>
    <property type="resolution" value="2.10 A"/>
    <property type="chains" value="A/B=22-564"/>
</dbReference>
<dbReference type="PDB" id="2ACE">
    <property type="method" value="X-ray"/>
    <property type="resolution" value="2.50 A"/>
    <property type="chains" value="A=22-558"/>
</dbReference>
<dbReference type="PDB" id="2ACK">
    <property type="method" value="X-ray"/>
    <property type="resolution" value="2.40 A"/>
    <property type="chains" value="A=22-558"/>
</dbReference>
<dbReference type="PDB" id="2BAG">
    <property type="method" value="X-ray"/>
    <property type="resolution" value="2.40 A"/>
    <property type="chains" value="A=22-564"/>
</dbReference>
<dbReference type="PDB" id="2C4H">
    <property type="method" value="X-ray"/>
    <property type="resolution" value="2.15 A"/>
    <property type="chains" value="A=22-558"/>
</dbReference>
<dbReference type="PDB" id="2C58">
    <property type="method" value="X-ray"/>
    <property type="resolution" value="2.30 A"/>
    <property type="chains" value="A=22-558"/>
</dbReference>
<dbReference type="PDB" id="2C5F">
    <property type="method" value="X-ray"/>
    <property type="resolution" value="2.60 A"/>
    <property type="chains" value="A=22-558"/>
</dbReference>
<dbReference type="PDB" id="2C5G">
    <property type="method" value="X-ray"/>
    <property type="resolution" value="1.95 A"/>
    <property type="chains" value="A=22-558"/>
</dbReference>
<dbReference type="PDB" id="2CEK">
    <property type="method" value="X-ray"/>
    <property type="resolution" value="2.20 A"/>
    <property type="chains" value="A=22-556"/>
</dbReference>
<dbReference type="PDB" id="2CKM">
    <property type="method" value="X-ray"/>
    <property type="resolution" value="2.15 A"/>
    <property type="chains" value="A=22-564"/>
</dbReference>
<dbReference type="PDB" id="2CMF">
    <property type="method" value="X-ray"/>
    <property type="resolution" value="2.50 A"/>
    <property type="chains" value="A=22-564"/>
</dbReference>
<dbReference type="PDB" id="2DFP">
    <property type="method" value="X-ray"/>
    <property type="resolution" value="2.30 A"/>
    <property type="chains" value="A=23-556"/>
</dbReference>
<dbReference type="PDB" id="2J3D">
    <property type="method" value="X-ray"/>
    <property type="resolution" value="2.60 A"/>
    <property type="chains" value="A=22-564"/>
</dbReference>
<dbReference type="PDB" id="2J3Q">
    <property type="method" value="X-ray"/>
    <property type="resolution" value="2.80 A"/>
    <property type="chains" value="A=22-564"/>
</dbReference>
<dbReference type="PDB" id="2J4F">
    <property type="method" value="X-ray"/>
    <property type="resolution" value="2.80 A"/>
    <property type="chains" value="A=22-564"/>
</dbReference>
<dbReference type="PDB" id="2V96">
    <property type="method" value="X-ray"/>
    <property type="resolution" value="2.40 A"/>
    <property type="chains" value="A/B=22-558"/>
</dbReference>
<dbReference type="PDB" id="2V97">
    <property type="method" value="X-ray"/>
    <property type="resolution" value="2.40 A"/>
    <property type="chains" value="A/B=22-558"/>
</dbReference>
<dbReference type="PDB" id="2V98">
    <property type="method" value="X-ray"/>
    <property type="resolution" value="3.00 A"/>
    <property type="chains" value="A/B=22-558"/>
</dbReference>
<dbReference type="PDB" id="2VA9">
    <property type="method" value="X-ray"/>
    <property type="resolution" value="2.40 A"/>
    <property type="chains" value="A/B=22-558"/>
</dbReference>
<dbReference type="PDB" id="2VJA">
    <property type="method" value="X-ray"/>
    <property type="resolution" value="2.30 A"/>
    <property type="chains" value="A/B=22-558"/>
</dbReference>
<dbReference type="PDB" id="2VJB">
    <property type="method" value="X-ray"/>
    <property type="resolution" value="2.39 A"/>
    <property type="chains" value="A/B=22-558"/>
</dbReference>
<dbReference type="PDB" id="2VJC">
    <property type="method" value="X-ray"/>
    <property type="resolution" value="2.20 A"/>
    <property type="chains" value="A/B=22-558"/>
</dbReference>
<dbReference type="PDB" id="2VJD">
    <property type="method" value="X-ray"/>
    <property type="resolution" value="2.30 A"/>
    <property type="chains" value="A/B=22-558"/>
</dbReference>
<dbReference type="PDB" id="2VQ6">
    <property type="method" value="X-ray"/>
    <property type="resolution" value="2.71 A"/>
    <property type="chains" value="A=22-564"/>
</dbReference>
<dbReference type="PDB" id="2VT6">
    <property type="method" value="X-ray"/>
    <property type="resolution" value="2.40 A"/>
    <property type="chains" value="A/B=22-558"/>
</dbReference>
<dbReference type="PDB" id="2VT7">
    <property type="method" value="X-ray"/>
    <property type="resolution" value="2.20 A"/>
    <property type="chains" value="A/B=22-558"/>
</dbReference>
<dbReference type="PDB" id="2W6C">
    <property type="method" value="X-ray"/>
    <property type="resolution" value="2.69 A"/>
    <property type="chains" value="X=1-586"/>
</dbReference>
<dbReference type="PDB" id="2WFZ">
    <property type="method" value="X-ray"/>
    <property type="resolution" value="1.95 A"/>
    <property type="chains" value="A=22-558"/>
</dbReference>
<dbReference type="PDB" id="2WG0">
    <property type="method" value="X-ray"/>
    <property type="resolution" value="2.20 A"/>
    <property type="chains" value="A=22-558"/>
</dbReference>
<dbReference type="PDB" id="2WG1">
    <property type="method" value="X-ray"/>
    <property type="resolution" value="2.20 A"/>
    <property type="chains" value="A=22-558"/>
</dbReference>
<dbReference type="PDB" id="2WG2">
    <property type="method" value="X-ray"/>
    <property type="resolution" value="1.95 A"/>
    <property type="chains" value="A=22-558"/>
</dbReference>
<dbReference type="PDB" id="2XI4">
    <property type="method" value="X-ray"/>
    <property type="resolution" value="2.30 A"/>
    <property type="chains" value="A/B=22-558"/>
</dbReference>
<dbReference type="PDB" id="3GEL">
    <property type="method" value="X-ray"/>
    <property type="resolution" value="2.39 A"/>
    <property type="chains" value="A=25-556"/>
</dbReference>
<dbReference type="PDB" id="3I6M">
    <property type="method" value="X-ray"/>
    <property type="resolution" value="2.26 A"/>
    <property type="chains" value="A=23-556"/>
</dbReference>
<dbReference type="PDB" id="3I6Z">
    <property type="method" value="X-ray"/>
    <property type="resolution" value="2.19 A"/>
    <property type="chains" value="A=23-556"/>
</dbReference>
<dbReference type="PDB" id="3M3D">
    <property type="method" value="X-ray"/>
    <property type="resolution" value="2.34 A"/>
    <property type="chains" value="A=22-564"/>
</dbReference>
<dbReference type="PDB" id="3ZV7">
    <property type="method" value="X-ray"/>
    <property type="resolution" value="2.26 A"/>
    <property type="chains" value="A=22-564"/>
</dbReference>
<dbReference type="PDB" id="4TVK">
    <property type="method" value="X-ray"/>
    <property type="resolution" value="2.30 A"/>
    <property type="chains" value="A=23-556"/>
</dbReference>
<dbReference type="PDB" id="4W63">
    <property type="method" value="X-ray"/>
    <property type="resolution" value="2.80 A"/>
    <property type="chains" value="A=23-556"/>
</dbReference>
<dbReference type="PDB" id="4X3C">
    <property type="method" value="X-ray"/>
    <property type="resolution" value="2.60 A"/>
    <property type="chains" value="A=23-556"/>
</dbReference>
<dbReference type="PDB" id="5BWB">
    <property type="method" value="X-ray"/>
    <property type="resolution" value="2.57 A"/>
    <property type="chains" value="A=22-558"/>
</dbReference>
<dbReference type="PDB" id="5BWC">
    <property type="method" value="X-ray"/>
    <property type="resolution" value="2.45 A"/>
    <property type="chains" value="A=22-558"/>
</dbReference>
<dbReference type="PDB" id="5DLP">
    <property type="method" value="X-ray"/>
    <property type="resolution" value="2.70 A"/>
    <property type="chains" value="A=22-564"/>
</dbReference>
<dbReference type="PDB" id="5E2I">
    <property type="method" value="X-ray"/>
    <property type="resolution" value="2.65 A"/>
    <property type="chains" value="A=25-556"/>
</dbReference>
<dbReference type="PDB" id="5E4J">
    <property type="method" value="X-ray"/>
    <property type="resolution" value="2.54 A"/>
    <property type="chains" value="A=25-556"/>
</dbReference>
<dbReference type="PDB" id="5E4T">
    <property type="method" value="X-ray"/>
    <property type="resolution" value="2.43 A"/>
    <property type="chains" value="A=22-564"/>
</dbReference>
<dbReference type="PDB" id="5EHX">
    <property type="method" value="X-ray"/>
    <property type="resolution" value="2.10 A"/>
    <property type="chains" value="A=25-556"/>
</dbReference>
<dbReference type="PDB" id="5EI5">
    <property type="method" value="X-ray"/>
    <property type="resolution" value="2.10 A"/>
    <property type="chains" value="A=23-556"/>
</dbReference>
<dbReference type="PDB" id="5IH7">
    <property type="method" value="X-ray"/>
    <property type="resolution" value="2.40 A"/>
    <property type="chains" value="A=23-556"/>
</dbReference>
<dbReference type="PDB" id="5NAP">
    <property type="method" value="X-ray"/>
    <property type="resolution" value="2.17 A"/>
    <property type="chains" value="A=22-564"/>
</dbReference>
<dbReference type="PDB" id="5NAU">
    <property type="method" value="X-ray"/>
    <property type="resolution" value="2.25 A"/>
    <property type="chains" value="A=22-564"/>
</dbReference>
<dbReference type="PDB" id="5NUU">
    <property type="method" value="X-ray"/>
    <property type="resolution" value="2.50 A"/>
    <property type="chains" value="A=22-564"/>
</dbReference>
<dbReference type="PDB" id="6EUC">
    <property type="method" value="X-ray"/>
    <property type="resolution" value="2.22 A"/>
    <property type="chains" value="A=25-556"/>
</dbReference>
<dbReference type="PDB" id="6EUE">
    <property type="method" value="X-ray"/>
    <property type="resolution" value="2.00 A"/>
    <property type="chains" value="A=24-556"/>
</dbReference>
<dbReference type="PDB" id="6EWK">
    <property type="method" value="X-ray"/>
    <property type="resolution" value="2.22 A"/>
    <property type="chains" value="A=25-556"/>
</dbReference>
<dbReference type="PDB" id="6EZG">
    <property type="method" value="X-ray"/>
    <property type="resolution" value="2.20 A"/>
    <property type="chains" value="A/B=22-558"/>
</dbReference>
<dbReference type="PDB" id="6EZH">
    <property type="method" value="X-ray"/>
    <property type="resolution" value="2.60 A"/>
    <property type="chains" value="A/B=22-558"/>
</dbReference>
<dbReference type="PDB" id="6FLD">
    <property type="method" value="X-ray"/>
    <property type="resolution" value="2.40 A"/>
    <property type="chains" value="A=25-556"/>
</dbReference>
<dbReference type="PDB" id="6FQN">
    <property type="method" value="X-ray"/>
    <property type="resolution" value="2.30 A"/>
    <property type="chains" value="A=25-556"/>
</dbReference>
<dbReference type="PDB" id="6G17">
    <property type="method" value="X-ray"/>
    <property type="resolution" value="2.20 A"/>
    <property type="chains" value="A=22-558"/>
</dbReference>
<dbReference type="PDB" id="6G1U">
    <property type="method" value="X-ray"/>
    <property type="resolution" value="1.79 A"/>
    <property type="chains" value="A/B=22-586"/>
</dbReference>
<dbReference type="PDB" id="6G1V">
    <property type="method" value="X-ray"/>
    <property type="resolution" value="1.82 A"/>
    <property type="chains" value="A/B=22-586"/>
</dbReference>
<dbReference type="PDB" id="6G1W">
    <property type="method" value="X-ray"/>
    <property type="resolution" value="1.90 A"/>
    <property type="chains" value="A/B=22-586"/>
</dbReference>
<dbReference type="PDB" id="6G4M">
    <property type="method" value="X-ray"/>
    <property type="resolution" value="2.63 A"/>
    <property type="chains" value="A/B=22-558"/>
</dbReference>
<dbReference type="PDB" id="6G4N">
    <property type="method" value="X-ray"/>
    <property type="resolution" value="2.90 A"/>
    <property type="chains" value="A/B=22-558"/>
</dbReference>
<dbReference type="PDB" id="6G4O">
    <property type="method" value="X-ray"/>
    <property type="resolution" value="2.78 A"/>
    <property type="chains" value="A/B=22-558"/>
</dbReference>
<dbReference type="PDB" id="6G4P">
    <property type="method" value="X-ray"/>
    <property type="resolution" value="2.83 A"/>
    <property type="chains" value="A/B=22-558"/>
</dbReference>
<dbReference type="PDB" id="6H12">
    <property type="method" value="X-ray"/>
    <property type="resolution" value="2.20 A"/>
    <property type="chains" value="A/B=22-586"/>
</dbReference>
<dbReference type="PDB" id="6H13">
    <property type="method" value="X-ray"/>
    <property type="resolution" value="2.80 A"/>
    <property type="chains" value="A/B=22-586"/>
</dbReference>
<dbReference type="PDB" id="6H14">
    <property type="method" value="X-ray"/>
    <property type="resolution" value="1.86 A"/>
    <property type="chains" value="A/B=22-586"/>
</dbReference>
<dbReference type="PDB" id="6TT0">
    <property type="method" value="X-ray"/>
    <property type="resolution" value="2.80 A"/>
    <property type="chains" value="A=25-556"/>
</dbReference>
<dbReference type="PDB" id="7AIS">
    <property type="method" value="X-ray"/>
    <property type="resolution" value="1.75 A"/>
    <property type="chains" value="A/B=1-586"/>
</dbReference>
<dbReference type="PDB" id="7AIT">
    <property type="method" value="X-ray"/>
    <property type="resolution" value="2.10 A"/>
    <property type="chains" value="A/B=1-586"/>
</dbReference>
<dbReference type="PDB" id="7AIU">
    <property type="method" value="X-ray"/>
    <property type="resolution" value="2.00 A"/>
    <property type="chains" value="A/B=1-586"/>
</dbReference>
<dbReference type="PDB" id="7AIV">
    <property type="method" value="X-ray"/>
    <property type="resolution" value="2.55 A"/>
    <property type="chains" value="A/B=1-586"/>
</dbReference>
<dbReference type="PDB" id="7AIW">
    <property type="method" value="X-ray"/>
    <property type="resolution" value="1.90 A"/>
    <property type="chains" value="A/B=1-586"/>
</dbReference>
<dbReference type="PDB" id="7AIX">
    <property type="method" value="X-ray"/>
    <property type="resolution" value="1.86 A"/>
    <property type="chains" value="A=1-586"/>
</dbReference>
<dbReference type="PDB" id="7B2W">
    <property type="method" value="X-ray"/>
    <property type="resolution" value="2.65 A"/>
    <property type="chains" value="A=22-558"/>
</dbReference>
<dbReference type="PDB" id="7B38">
    <property type="method" value="X-ray"/>
    <property type="resolution" value="1.85 A"/>
    <property type="chains" value="A=25-556"/>
</dbReference>
<dbReference type="PDB" id="7B8E">
    <property type="method" value="X-ray"/>
    <property type="resolution" value="2.23 A"/>
    <property type="chains" value="A=22-558"/>
</dbReference>
<dbReference type="PDBsum" id="1ACJ"/>
<dbReference type="PDBsum" id="1ACL"/>
<dbReference type="PDBsum" id="1AMN"/>
<dbReference type="PDBsum" id="1AX9"/>
<dbReference type="PDBsum" id="1CFJ"/>
<dbReference type="PDBsum" id="1DX6"/>
<dbReference type="PDBsum" id="1E3Q"/>
<dbReference type="PDBsum" id="1E66"/>
<dbReference type="PDBsum" id="1EA5"/>
<dbReference type="PDBsum" id="1EEA"/>
<dbReference type="PDBsum" id="1EVE"/>
<dbReference type="PDBsum" id="1FSS"/>
<dbReference type="PDBsum" id="1GPK"/>
<dbReference type="PDBsum" id="1GPN"/>
<dbReference type="PDBsum" id="1GQR"/>
<dbReference type="PDBsum" id="1GQS"/>
<dbReference type="PDBsum" id="1H22"/>
<dbReference type="PDBsum" id="1H23"/>
<dbReference type="PDBsum" id="1HBJ"/>
<dbReference type="PDBsum" id="1JJB"/>
<dbReference type="PDBsum" id="1OCE"/>
<dbReference type="PDBsum" id="1ODC"/>
<dbReference type="PDBsum" id="1QID"/>
<dbReference type="PDBsum" id="1QIE"/>
<dbReference type="PDBsum" id="1QIF"/>
<dbReference type="PDBsum" id="1QIG"/>
<dbReference type="PDBsum" id="1QIH"/>
<dbReference type="PDBsum" id="1QII"/>
<dbReference type="PDBsum" id="1QIJ"/>
<dbReference type="PDBsum" id="1QIK"/>
<dbReference type="PDBsum" id="1QIM"/>
<dbReference type="PDBsum" id="1QTI"/>
<dbReference type="PDBsum" id="1SOM"/>
<dbReference type="PDBsum" id="1U65"/>
<dbReference type="PDBsum" id="1UT6"/>
<dbReference type="PDBsum" id="1VOT"/>
<dbReference type="PDBsum" id="1VXO"/>
<dbReference type="PDBsum" id="1VXR"/>
<dbReference type="PDBsum" id="1W4L"/>
<dbReference type="PDBsum" id="1W6R"/>
<dbReference type="PDBsum" id="1W75"/>
<dbReference type="PDBsum" id="1W76"/>
<dbReference type="PDBsum" id="1ZGB"/>
<dbReference type="PDBsum" id="1ZGC"/>
<dbReference type="PDBsum" id="2ACE"/>
<dbReference type="PDBsum" id="2ACK"/>
<dbReference type="PDBsum" id="2BAG"/>
<dbReference type="PDBsum" id="2C4H"/>
<dbReference type="PDBsum" id="2C58"/>
<dbReference type="PDBsum" id="2C5F"/>
<dbReference type="PDBsum" id="2C5G"/>
<dbReference type="PDBsum" id="2CEK"/>
<dbReference type="PDBsum" id="2CKM"/>
<dbReference type="PDBsum" id="2CMF"/>
<dbReference type="PDBsum" id="2DFP"/>
<dbReference type="PDBsum" id="2J3D"/>
<dbReference type="PDBsum" id="2J3Q"/>
<dbReference type="PDBsum" id="2J4F"/>
<dbReference type="PDBsum" id="2V96"/>
<dbReference type="PDBsum" id="2V97"/>
<dbReference type="PDBsum" id="2V98"/>
<dbReference type="PDBsum" id="2VA9"/>
<dbReference type="PDBsum" id="2VJA"/>
<dbReference type="PDBsum" id="2VJB"/>
<dbReference type="PDBsum" id="2VJC"/>
<dbReference type="PDBsum" id="2VJD"/>
<dbReference type="PDBsum" id="2VQ6"/>
<dbReference type="PDBsum" id="2VT6"/>
<dbReference type="PDBsum" id="2VT7"/>
<dbReference type="PDBsum" id="2W6C"/>
<dbReference type="PDBsum" id="2WFZ"/>
<dbReference type="PDBsum" id="2WG0"/>
<dbReference type="PDBsum" id="2WG1"/>
<dbReference type="PDBsum" id="2WG2"/>
<dbReference type="PDBsum" id="2XI4"/>
<dbReference type="PDBsum" id="3GEL"/>
<dbReference type="PDBsum" id="3I6M"/>
<dbReference type="PDBsum" id="3I6Z"/>
<dbReference type="PDBsum" id="3M3D"/>
<dbReference type="PDBsum" id="3ZV7"/>
<dbReference type="PDBsum" id="4TVK"/>
<dbReference type="PDBsum" id="4W63"/>
<dbReference type="PDBsum" id="4X3C"/>
<dbReference type="PDBsum" id="5BWB"/>
<dbReference type="PDBsum" id="5BWC"/>
<dbReference type="PDBsum" id="5DLP"/>
<dbReference type="PDBsum" id="5E2I"/>
<dbReference type="PDBsum" id="5E4J"/>
<dbReference type="PDBsum" id="5E4T"/>
<dbReference type="PDBsum" id="5EHX"/>
<dbReference type="PDBsum" id="5EI5"/>
<dbReference type="PDBsum" id="5IH7"/>
<dbReference type="PDBsum" id="5NAP"/>
<dbReference type="PDBsum" id="5NAU"/>
<dbReference type="PDBsum" id="5NUU"/>
<dbReference type="PDBsum" id="6EUC"/>
<dbReference type="PDBsum" id="6EUE"/>
<dbReference type="PDBsum" id="6EWK"/>
<dbReference type="PDBsum" id="6EZG"/>
<dbReference type="PDBsum" id="6EZH"/>
<dbReference type="PDBsum" id="6FLD"/>
<dbReference type="PDBsum" id="6FQN"/>
<dbReference type="PDBsum" id="6G17"/>
<dbReference type="PDBsum" id="6G1U"/>
<dbReference type="PDBsum" id="6G1V"/>
<dbReference type="PDBsum" id="6G1W"/>
<dbReference type="PDBsum" id="6G4M"/>
<dbReference type="PDBsum" id="6G4N"/>
<dbReference type="PDBsum" id="6G4O"/>
<dbReference type="PDBsum" id="6G4P"/>
<dbReference type="PDBsum" id="6H12"/>
<dbReference type="PDBsum" id="6H13"/>
<dbReference type="PDBsum" id="6H14"/>
<dbReference type="PDBsum" id="6TT0"/>
<dbReference type="PDBsum" id="7AIS"/>
<dbReference type="PDBsum" id="7AIT"/>
<dbReference type="PDBsum" id="7AIU"/>
<dbReference type="PDBsum" id="7AIV"/>
<dbReference type="PDBsum" id="7AIW"/>
<dbReference type="PDBsum" id="7AIX"/>
<dbReference type="PDBsum" id="7B2W"/>
<dbReference type="PDBsum" id="7B38"/>
<dbReference type="PDBsum" id="7B8E"/>
<dbReference type="SMR" id="P04058"/>
<dbReference type="MINT" id="P04058"/>
<dbReference type="BindingDB" id="P04058"/>
<dbReference type="ChEMBL" id="CHEMBL4780"/>
<dbReference type="DrugCentral" id="P04058"/>
<dbReference type="ESTHER" id="torca-ACHE">
    <property type="family name" value="ACHE"/>
</dbReference>
<dbReference type="MEROPS" id="S09.980"/>
<dbReference type="GlyCosmos" id="P04058">
    <property type="glycosylation" value="4 sites, No reported glycans"/>
</dbReference>
<dbReference type="iPTMnet" id="P04058"/>
<dbReference type="BioCyc" id="MetaCyc:MONOMER-16823"/>
<dbReference type="BRENDA" id="3.1.1.7">
    <property type="organism ID" value="6395"/>
</dbReference>
<dbReference type="EvolutionaryTrace" id="P04058"/>
<dbReference type="PRO" id="PR:P04058"/>
<dbReference type="GO" id="GO:0005615">
    <property type="term" value="C:extracellular space"/>
    <property type="evidence" value="ECO:0007669"/>
    <property type="project" value="TreeGrafter"/>
</dbReference>
<dbReference type="GO" id="GO:0005886">
    <property type="term" value="C:plasma membrane"/>
    <property type="evidence" value="ECO:0007669"/>
    <property type="project" value="UniProtKB-SubCell"/>
</dbReference>
<dbReference type="GO" id="GO:0098552">
    <property type="term" value="C:side of membrane"/>
    <property type="evidence" value="ECO:0007669"/>
    <property type="project" value="UniProtKB-KW"/>
</dbReference>
<dbReference type="GO" id="GO:0045202">
    <property type="term" value="C:synapse"/>
    <property type="evidence" value="ECO:0007669"/>
    <property type="project" value="UniProtKB-SubCell"/>
</dbReference>
<dbReference type="GO" id="GO:0043083">
    <property type="term" value="C:synaptic cleft"/>
    <property type="evidence" value="ECO:0007669"/>
    <property type="project" value="GOC"/>
</dbReference>
<dbReference type="GO" id="GO:0003990">
    <property type="term" value="F:acetylcholinesterase activity"/>
    <property type="evidence" value="ECO:0007669"/>
    <property type="project" value="UniProtKB-EC"/>
</dbReference>
<dbReference type="GO" id="GO:0001507">
    <property type="term" value="P:acetylcholine catabolic process in synaptic cleft"/>
    <property type="evidence" value="ECO:0007669"/>
    <property type="project" value="InterPro"/>
</dbReference>
<dbReference type="GO" id="GO:0019695">
    <property type="term" value="P:choline metabolic process"/>
    <property type="evidence" value="ECO:0007669"/>
    <property type="project" value="TreeGrafter"/>
</dbReference>
<dbReference type="CDD" id="cd00312">
    <property type="entry name" value="Esterase_lipase"/>
    <property type="match status" value="1"/>
</dbReference>
<dbReference type="FunFam" id="3.40.50.1820:FF:000029">
    <property type="entry name" value="Acetylcholinesterase"/>
    <property type="match status" value="1"/>
</dbReference>
<dbReference type="Gene3D" id="3.40.50.1820">
    <property type="entry name" value="alpha/beta hydrolase"/>
    <property type="match status" value="1"/>
</dbReference>
<dbReference type="InterPro" id="IPR029058">
    <property type="entry name" value="AB_hydrolase_fold"/>
</dbReference>
<dbReference type="InterPro" id="IPR050654">
    <property type="entry name" value="AChE-related_enzymes"/>
</dbReference>
<dbReference type="InterPro" id="IPR000908">
    <property type="entry name" value="Acylcholinesterase_fish/snake"/>
</dbReference>
<dbReference type="InterPro" id="IPR002018">
    <property type="entry name" value="CarbesteraseB"/>
</dbReference>
<dbReference type="InterPro" id="IPR019826">
    <property type="entry name" value="Carboxylesterase_B_AS"/>
</dbReference>
<dbReference type="InterPro" id="IPR019819">
    <property type="entry name" value="Carboxylesterase_B_CS"/>
</dbReference>
<dbReference type="InterPro" id="IPR000997">
    <property type="entry name" value="Cholinesterase"/>
</dbReference>
<dbReference type="PANTHER" id="PTHR43918">
    <property type="entry name" value="ACETYLCHOLINESTERASE"/>
    <property type="match status" value="1"/>
</dbReference>
<dbReference type="PANTHER" id="PTHR43918:SF11">
    <property type="entry name" value="ACETYLCHOLINESTERASE"/>
    <property type="match status" value="1"/>
</dbReference>
<dbReference type="Pfam" id="PF00135">
    <property type="entry name" value="COesterase"/>
    <property type="match status" value="1"/>
</dbReference>
<dbReference type="PRINTS" id="PR00879">
    <property type="entry name" value="ACHEFISH"/>
</dbReference>
<dbReference type="PRINTS" id="PR00878">
    <property type="entry name" value="CHOLNESTRASE"/>
</dbReference>
<dbReference type="SUPFAM" id="SSF53474">
    <property type="entry name" value="alpha/beta-Hydrolases"/>
    <property type="match status" value="1"/>
</dbReference>
<dbReference type="PROSITE" id="PS00122">
    <property type="entry name" value="CARBOXYLESTERASE_B_1"/>
    <property type="match status" value="1"/>
</dbReference>
<dbReference type="PROSITE" id="PS00941">
    <property type="entry name" value="CARBOXYLESTERASE_B_2"/>
    <property type="match status" value="1"/>
</dbReference>